<keyword id="KW-0687">Ribonucleoprotein</keyword>
<keyword id="KW-0689">Ribosomal protein</keyword>
<keyword id="KW-0694">RNA-binding</keyword>
<keyword id="KW-0699">rRNA-binding</keyword>
<keyword id="KW-0820">tRNA-binding</keyword>
<evidence type="ECO:0000255" key="1">
    <source>
        <dbReference type="HAMAP-Rule" id="MF_01315"/>
    </source>
</evidence>
<evidence type="ECO:0000256" key="2">
    <source>
        <dbReference type="SAM" id="MobiDB-lite"/>
    </source>
</evidence>
<evidence type="ECO:0000305" key="3"/>
<proteinExistence type="inferred from homology"/>
<comment type="function">
    <text evidence="1">Located at the top of the head of the 30S subunit, it contacts several helices of the 16S rRNA. In the 70S ribosome it contacts the 23S rRNA (bridge B1a) and protein L5 of the 50S subunit (bridge B1b), connecting the 2 subunits; these bridges are implicated in subunit movement. Contacts the tRNAs in the A and P-sites.</text>
</comment>
<comment type="subunit">
    <text evidence="1">Part of the 30S ribosomal subunit. Forms a loose heterodimer with protein S19. Forms two bridges to the 50S subunit in the 70S ribosome.</text>
</comment>
<comment type="similarity">
    <text evidence="1">Belongs to the universal ribosomal protein uS13 family.</text>
</comment>
<accession>B7HQW9</accession>
<protein>
    <recommendedName>
        <fullName evidence="1">Small ribosomal subunit protein uS13</fullName>
    </recommendedName>
    <alternativeName>
        <fullName evidence="3">30S ribosomal protein S13</fullName>
    </alternativeName>
</protein>
<dbReference type="EMBL" id="CP001177">
    <property type="protein sequence ID" value="ACJ77770.1"/>
    <property type="molecule type" value="Genomic_DNA"/>
</dbReference>
<dbReference type="SMR" id="B7HQW9"/>
<dbReference type="KEGG" id="bcr:BCAH187_A0166"/>
<dbReference type="HOGENOM" id="CLU_103849_1_1_9"/>
<dbReference type="Proteomes" id="UP000002214">
    <property type="component" value="Chromosome"/>
</dbReference>
<dbReference type="GO" id="GO:0005829">
    <property type="term" value="C:cytosol"/>
    <property type="evidence" value="ECO:0007669"/>
    <property type="project" value="TreeGrafter"/>
</dbReference>
<dbReference type="GO" id="GO:0015935">
    <property type="term" value="C:small ribosomal subunit"/>
    <property type="evidence" value="ECO:0007669"/>
    <property type="project" value="TreeGrafter"/>
</dbReference>
<dbReference type="GO" id="GO:0019843">
    <property type="term" value="F:rRNA binding"/>
    <property type="evidence" value="ECO:0007669"/>
    <property type="project" value="UniProtKB-UniRule"/>
</dbReference>
<dbReference type="GO" id="GO:0003735">
    <property type="term" value="F:structural constituent of ribosome"/>
    <property type="evidence" value="ECO:0007669"/>
    <property type="project" value="InterPro"/>
</dbReference>
<dbReference type="GO" id="GO:0000049">
    <property type="term" value="F:tRNA binding"/>
    <property type="evidence" value="ECO:0007669"/>
    <property type="project" value="UniProtKB-UniRule"/>
</dbReference>
<dbReference type="GO" id="GO:0006412">
    <property type="term" value="P:translation"/>
    <property type="evidence" value="ECO:0007669"/>
    <property type="project" value="UniProtKB-UniRule"/>
</dbReference>
<dbReference type="FunFam" id="1.10.8.50:FF:000001">
    <property type="entry name" value="30S ribosomal protein S13"/>
    <property type="match status" value="1"/>
</dbReference>
<dbReference type="FunFam" id="4.10.910.10:FF:000001">
    <property type="entry name" value="30S ribosomal protein S13"/>
    <property type="match status" value="1"/>
</dbReference>
<dbReference type="Gene3D" id="1.10.8.50">
    <property type="match status" value="1"/>
</dbReference>
<dbReference type="Gene3D" id="4.10.910.10">
    <property type="entry name" value="30s ribosomal protein s13, domain 2"/>
    <property type="match status" value="1"/>
</dbReference>
<dbReference type="HAMAP" id="MF_01315">
    <property type="entry name" value="Ribosomal_uS13"/>
    <property type="match status" value="1"/>
</dbReference>
<dbReference type="InterPro" id="IPR027437">
    <property type="entry name" value="Rbsml_uS13_C"/>
</dbReference>
<dbReference type="InterPro" id="IPR001892">
    <property type="entry name" value="Ribosomal_uS13"/>
</dbReference>
<dbReference type="InterPro" id="IPR010979">
    <property type="entry name" value="Ribosomal_uS13-like_H2TH"/>
</dbReference>
<dbReference type="InterPro" id="IPR019980">
    <property type="entry name" value="Ribosomal_uS13_bac-type"/>
</dbReference>
<dbReference type="InterPro" id="IPR018269">
    <property type="entry name" value="Ribosomal_uS13_CS"/>
</dbReference>
<dbReference type="NCBIfam" id="TIGR03631">
    <property type="entry name" value="uS13_bact"/>
    <property type="match status" value="1"/>
</dbReference>
<dbReference type="PANTHER" id="PTHR10871">
    <property type="entry name" value="30S RIBOSOMAL PROTEIN S13/40S RIBOSOMAL PROTEIN S18"/>
    <property type="match status" value="1"/>
</dbReference>
<dbReference type="PANTHER" id="PTHR10871:SF1">
    <property type="entry name" value="SMALL RIBOSOMAL SUBUNIT PROTEIN US13M"/>
    <property type="match status" value="1"/>
</dbReference>
<dbReference type="Pfam" id="PF00416">
    <property type="entry name" value="Ribosomal_S13"/>
    <property type="match status" value="1"/>
</dbReference>
<dbReference type="PIRSF" id="PIRSF002134">
    <property type="entry name" value="Ribosomal_S13"/>
    <property type="match status" value="1"/>
</dbReference>
<dbReference type="SUPFAM" id="SSF46946">
    <property type="entry name" value="S13-like H2TH domain"/>
    <property type="match status" value="1"/>
</dbReference>
<dbReference type="PROSITE" id="PS00646">
    <property type="entry name" value="RIBOSOMAL_S13_1"/>
    <property type="match status" value="1"/>
</dbReference>
<dbReference type="PROSITE" id="PS50159">
    <property type="entry name" value="RIBOSOMAL_S13_2"/>
    <property type="match status" value="1"/>
</dbReference>
<organism>
    <name type="scientific">Bacillus cereus (strain AH187)</name>
    <dbReference type="NCBI Taxonomy" id="405534"/>
    <lineage>
        <taxon>Bacteria</taxon>
        <taxon>Bacillati</taxon>
        <taxon>Bacillota</taxon>
        <taxon>Bacilli</taxon>
        <taxon>Bacillales</taxon>
        <taxon>Bacillaceae</taxon>
        <taxon>Bacillus</taxon>
        <taxon>Bacillus cereus group</taxon>
    </lineage>
</organism>
<sequence length="121" mass="13805">MARIAGVDIPRDKRVVISLTYVFGIGRTTAEKILAEAGVSEETRVRDLTEDELGRIRDIIDRIKVEGDLRREVSLNIKRLMEIGSYRGLRHRRGLPVRGQNSKNNARTRKGPRRTVANKKK</sequence>
<name>RS13_BACC7</name>
<reference key="1">
    <citation type="submission" date="2008-10" db="EMBL/GenBank/DDBJ databases">
        <title>Genome sequence of Bacillus cereus AH187.</title>
        <authorList>
            <person name="Dodson R.J."/>
            <person name="Durkin A.S."/>
            <person name="Rosovitz M.J."/>
            <person name="Rasko D.A."/>
            <person name="Kolsto A.B."/>
            <person name="Okstad O.A."/>
            <person name="Ravel J."/>
            <person name="Sutton G."/>
        </authorList>
    </citation>
    <scope>NUCLEOTIDE SEQUENCE [LARGE SCALE GENOMIC DNA]</scope>
    <source>
        <strain>AH187</strain>
    </source>
</reference>
<gene>
    <name evidence="1" type="primary">rpsM</name>
    <name type="ordered locus">BCAH187_A0166</name>
</gene>
<feature type="chain" id="PRO_1000141219" description="Small ribosomal subunit protein uS13">
    <location>
        <begin position="1"/>
        <end position="121"/>
    </location>
</feature>
<feature type="region of interest" description="Disordered" evidence="2">
    <location>
        <begin position="91"/>
        <end position="121"/>
    </location>
</feature>
<feature type="compositionally biased region" description="Basic residues" evidence="2">
    <location>
        <begin position="106"/>
        <end position="121"/>
    </location>
</feature>